<proteinExistence type="evidence at protein level"/>
<organismHost>
    <name type="scientific">Homo sapiens</name>
    <name type="common">Human</name>
    <dbReference type="NCBI Taxonomy" id="9606"/>
</organismHost>
<organism>
    <name type="scientific">Human rhinovirus 3</name>
    <name type="common">HRV-3</name>
    <dbReference type="NCBI Taxonomy" id="44130"/>
    <lineage>
        <taxon>Viruses</taxon>
        <taxon>Riboviria</taxon>
        <taxon>Orthornavirae</taxon>
        <taxon>Pisuviricota</taxon>
        <taxon>Pisoniviricetes</taxon>
        <taxon>Picornavirales</taxon>
        <taxon>Picornaviridae</taxon>
        <taxon>Ensavirinae</taxon>
        <taxon>Enterovirus</taxon>
        <taxon>Rhinovirus B</taxon>
    </lineage>
</organism>
<evidence type="ECO:0000250" key="1">
    <source>
        <dbReference type="UniProtKB" id="P03300"/>
    </source>
</evidence>
<evidence type="ECO:0000250" key="2">
    <source>
        <dbReference type="UniProtKB" id="P03301"/>
    </source>
</evidence>
<evidence type="ECO:0000250" key="3">
    <source>
        <dbReference type="UniProtKB" id="P03303"/>
    </source>
</evidence>
<evidence type="ECO:0000250" key="4">
    <source>
        <dbReference type="UniProtKB" id="P03313"/>
    </source>
</evidence>
<evidence type="ECO:0000250" key="5">
    <source>
        <dbReference type="UniProtKB" id="P04936"/>
    </source>
</evidence>
<evidence type="ECO:0000250" key="6">
    <source>
        <dbReference type="UniProtKB" id="Q66478"/>
    </source>
</evidence>
<evidence type="ECO:0000250" key="7">
    <source>
        <dbReference type="UniProtKB" id="Q9QF31"/>
    </source>
</evidence>
<evidence type="ECO:0000255" key="8"/>
<evidence type="ECO:0000255" key="9">
    <source>
        <dbReference type="PROSITE-ProRule" id="PRU00539"/>
    </source>
</evidence>
<evidence type="ECO:0000255" key="10">
    <source>
        <dbReference type="PROSITE-ProRule" id="PRU00551"/>
    </source>
</evidence>
<evidence type="ECO:0000255" key="11">
    <source>
        <dbReference type="PROSITE-ProRule" id="PRU01222"/>
    </source>
</evidence>
<evidence type="ECO:0000256" key="12">
    <source>
        <dbReference type="SAM" id="MobiDB-lite"/>
    </source>
</evidence>
<evidence type="ECO:0000305" key="13"/>
<evidence type="ECO:0007829" key="14">
    <source>
        <dbReference type="PDB" id="1RHI"/>
    </source>
</evidence>
<accession>Q82081</accession>
<accession>A5GZD4</accession>
<accession>A7KC14</accession>
<feature type="initiator methionine" description="Removed; by host" evidence="1">
    <location>
        <position position="1"/>
    </location>
</feature>
<feature type="chain" id="PRO_0000426521" description="Genome polyprotein">
    <location>
        <begin position="2"/>
        <end position="2178"/>
    </location>
</feature>
<feature type="chain" id="PRO_0000426522" description="P1">
    <location>
        <begin position="2"/>
        <end position="855"/>
    </location>
</feature>
<feature type="chain" id="PRO_0000426523" description="Capsid protein VP0">
    <location>
        <begin position="2"/>
        <end position="331"/>
    </location>
</feature>
<feature type="chain" id="PRO_0000426524" description="Capsid protein VP4">
    <location>
        <begin position="2"/>
        <end position="69"/>
    </location>
</feature>
<feature type="chain" id="PRO_0000426525" description="Capsid protein VP2">
    <location>
        <begin position="70"/>
        <end position="331"/>
    </location>
</feature>
<feature type="chain" id="PRO_0000426526" description="Capsid protein VP3">
    <location>
        <begin position="332"/>
        <end position="561"/>
    </location>
</feature>
<feature type="chain" id="PRO_0000426527" description="Capsid protein VP1">
    <location>
        <begin position="562"/>
        <end position="855"/>
    </location>
</feature>
<feature type="chain" id="PRO_0000426528" description="P2">
    <location>
        <begin position="856"/>
        <end position="1428"/>
    </location>
</feature>
<feature type="chain" id="PRO_0000423099" description="Protease 2A">
    <location>
        <begin position="856"/>
        <end position="1001"/>
    </location>
</feature>
<feature type="chain" id="PRO_0000423100" description="Protein 2B">
    <location>
        <begin position="1002"/>
        <end position="1098"/>
    </location>
</feature>
<feature type="chain" id="PRO_0000426529" description="Protein 2C">
    <location>
        <begin position="1099"/>
        <end position="1428"/>
    </location>
</feature>
<feature type="chain" id="PRO_0000426530" description="P3">
    <location>
        <begin position="1429"/>
        <end position="2178"/>
    </location>
</feature>
<feature type="chain" id="PRO_0000426531" description="Protein 3AB">
    <location>
        <begin position="1429"/>
        <end position="1536"/>
    </location>
</feature>
<feature type="chain" id="PRO_0000423102" description="Protein 3A">
    <location>
        <begin position="1429"/>
        <end position="1513"/>
    </location>
</feature>
<feature type="chain" id="PRO_0000426532" description="Viral protein genome-linked">
    <location>
        <begin position="1514"/>
        <end position="1536"/>
    </location>
</feature>
<feature type="chain" id="PRO_0000426533" description="Protein 3CD">
    <location>
        <begin position="1537"/>
        <end position="2178"/>
    </location>
</feature>
<feature type="chain" id="PRO_0000426534" description="Protease 3C">
    <location>
        <begin position="1537"/>
        <end position="1718"/>
    </location>
</feature>
<feature type="chain" id="PRO_0000426535" description="RNA-directed RNA polymerase">
    <location>
        <begin position="1719"/>
        <end position="2178"/>
    </location>
</feature>
<feature type="topological domain" description="Cytoplasmic" evidence="8">
    <location>
        <begin position="2"/>
        <end position="1490"/>
    </location>
</feature>
<feature type="intramembrane region" evidence="8">
    <location>
        <begin position="1491"/>
        <end position="1506"/>
    </location>
</feature>
<feature type="topological domain" description="Cytoplasmic" evidence="8">
    <location>
        <begin position="1507"/>
        <end position="2178"/>
    </location>
</feature>
<feature type="domain" description="SF3 helicase" evidence="10">
    <location>
        <begin position="1204"/>
        <end position="1360"/>
    </location>
</feature>
<feature type="domain" description="Peptidase C3" evidence="11">
    <location>
        <begin position="1537"/>
        <end position="1714"/>
    </location>
</feature>
<feature type="domain" description="RdRp catalytic" evidence="9">
    <location>
        <begin position="1946"/>
        <end position="2059"/>
    </location>
</feature>
<feature type="zinc finger region" description="C4-type" evidence="1">
    <location>
        <begin position="1368"/>
        <end position="1385"/>
    </location>
</feature>
<feature type="region of interest" description="Disordered" evidence="12">
    <location>
        <begin position="1"/>
        <end position="20"/>
    </location>
</feature>
<feature type="region of interest" description="Amphipathic alpha-helix" evidence="8">
    <location>
        <begin position="564"/>
        <end position="584"/>
    </location>
</feature>
<feature type="region of interest" description="Oligomerization" evidence="1">
    <location>
        <begin position="1100"/>
        <end position="1238"/>
    </location>
</feature>
<feature type="region of interest" description="Membrane-binding" evidence="1">
    <location>
        <begin position="1100"/>
        <end position="1172"/>
    </location>
</feature>
<feature type="region of interest" description="RNA-binding" evidence="1">
    <location>
        <begin position="1121"/>
        <end position="1125"/>
    </location>
</feature>
<feature type="region of interest" description="RNA-binding" evidence="1">
    <location>
        <begin position="1412"/>
        <end position="1419"/>
    </location>
</feature>
<feature type="region of interest" description="Oligomerization" evidence="1">
    <location>
        <begin position="1423"/>
        <end position="1428"/>
    </location>
</feature>
<feature type="active site" description="For protease 2A activity" evidence="1">
    <location>
        <position position="875"/>
    </location>
</feature>
<feature type="active site" description="For protease 2A activity" evidence="1">
    <location>
        <position position="893"/>
    </location>
</feature>
<feature type="active site" description="For protease 2A activity" evidence="1">
    <location>
        <position position="964"/>
    </location>
</feature>
<feature type="active site" description="For protease 3C activity" evidence="11">
    <location>
        <position position="1576"/>
    </location>
</feature>
<feature type="active site" description="For protease 3C activity" evidence="11">
    <location>
        <position position="1607"/>
    </location>
</feature>
<feature type="active site" description="For protease 3C activity" evidence="11">
    <location>
        <position position="1682"/>
    </location>
</feature>
<feature type="binding site" evidence="7">
    <location>
        <position position="910"/>
    </location>
    <ligand>
        <name>Zn(2+)</name>
        <dbReference type="ChEBI" id="CHEBI:29105"/>
        <label>1</label>
        <note>structural</note>
    </ligand>
</feature>
<feature type="binding site" evidence="7">
    <location>
        <position position="912"/>
    </location>
    <ligand>
        <name>Zn(2+)</name>
        <dbReference type="ChEBI" id="CHEBI:29105"/>
        <label>1</label>
        <note>structural</note>
    </ligand>
</feature>
<feature type="binding site" evidence="7">
    <location>
        <position position="970"/>
    </location>
    <ligand>
        <name>Zn(2+)</name>
        <dbReference type="ChEBI" id="CHEBI:29105"/>
        <label>1</label>
        <note>structural</note>
    </ligand>
</feature>
<feature type="binding site" evidence="7">
    <location>
        <position position="972"/>
    </location>
    <ligand>
        <name>Zn(2+)</name>
        <dbReference type="ChEBI" id="CHEBI:29105"/>
        <label>1</label>
        <note>structural</note>
    </ligand>
</feature>
<feature type="binding site" evidence="1">
    <location>
        <position position="1368"/>
    </location>
    <ligand>
        <name>Zn(2+)</name>
        <dbReference type="ChEBI" id="CHEBI:29105"/>
        <label>2</label>
    </ligand>
</feature>
<feature type="binding site" evidence="1">
    <location>
        <position position="1371"/>
    </location>
    <ligand>
        <name>Zn(2+)</name>
        <dbReference type="ChEBI" id="CHEBI:29105"/>
        <label>2</label>
    </ligand>
</feature>
<feature type="binding site" evidence="1">
    <location>
        <position position="1380"/>
    </location>
    <ligand>
        <name>Zn(2+)</name>
        <dbReference type="ChEBI" id="CHEBI:29105"/>
        <label>2</label>
    </ligand>
</feature>
<feature type="binding site" evidence="1">
    <location>
        <position position="1385"/>
    </location>
    <ligand>
        <name>Zn(2+)</name>
        <dbReference type="ChEBI" id="CHEBI:29105"/>
        <label>2</label>
    </ligand>
</feature>
<feature type="binding site" evidence="1">
    <location>
        <position position="1951"/>
    </location>
    <ligand>
        <name>Mg(2+)</name>
        <dbReference type="ChEBI" id="CHEBI:18420"/>
        <label>1</label>
        <note>catalytic; for RdRp activity</note>
    </ligand>
</feature>
<feature type="binding site" evidence="1">
    <location>
        <position position="1951"/>
    </location>
    <ligand>
        <name>Mg(2+)</name>
        <dbReference type="ChEBI" id="CHEBI:18420"/>
        <label>2</label>
        <note>catalytic; for RdRp activity</note>
    </ligand>
</feature>
<feature type="binding site" evidence="1">
    <location>
        <position position="2045"/>
    </location>
    <ligand>
        <name>Mg(2+)</name>
        <dbReference type="ChEBI" id="CHEBI:18420"/>
        <label>1</label>
        <note>catalytic; for RdRp activity</note>
    </ligand>
</feature>
<feature type="binding site" evidence="1">
    <location>
        <position position="2045"/>
    </location>
    <ligand>
        <name>Mg(2+)</name>
        <dbReference type="ChEBI" id="CHEBI:18420"/>
        <label>2</label>
        <note>catalytic; for RdRp activity</note>
    </ligand>
</feature>
<feature type="site" description="Cleavage; by autolysis" evidence="1">
    <location>
        <begin position="69"/>
        <end position="70"/>
    </location>
</feature>
<feature type="site" description="Cleavage; by protease 3C" evidence="2">
    <location>
        <begin position="331"/>
        <end position="332"/>
    </location>
</feature>
<feature type="site" description="Cleavage; by autolysis" evidence="2">
    <location>
        <begin position="855"/>
        <end position="856"/>
    </location>
</feature>
<feature type="site" description="Cleavage; by protease 3C" evidence="2">
    <location>
        <begin position="1001"/>
        <end position="1002"/>
    </location>
</feature>
<feature type="site" description="Cleavage; by protease 3C" evidence="2">
    <location>
        <begin position="1098"/>
        <end position="1099"/>
    </location>
</feature>
<feature type="site" description="Involved in the interaction with host RTN3" evidence="6">
    <location>
        <position position="1124"/>
    </location>
</feature>
<feature type="site" description="Cleavage; by protease 3C" evidence="2">
    <location>
        <begin position="1428"/>
        <end position="1429"/>
    </location>
</feature>
<feature type="site" description="Cleavage; by protease 3C" evidence="2">
    <location>
        <begin position="1513"/>
        <end position="1514"/>
    </location>
</feature>
<feature type="site" description="Cleavage; by protease 3C" evidence="2">
    <location>
        <begin position="1536"/>
        <end position="1537"/>
    </location>
</feature>
<feature type="site" description="Cleavage; by protease 3C" evidence="2">
    <location>
        <begin position="1718"/>
        <end position="1719"/>
    </location>
</feature>
<feature type="modified residue" description="O-(5'-phospho-RNA)-tyrosine" evidence="1">
    <location>
        <position position="1516"/>
    </location>
</feature>
<feature type="lipid moiety-binding region" description="N-myristoyl glycine; by host" evidence="1">
    <location>
        <position position="2"/>
    </location>
</feature>
<feature type="sequence variant">
    <original>L</original>
    <variation>M</variation>
    <location>
        <position position="87"/>
    </location>
</feature>
<feature type="sequence variant">
    <original>A</original>
    <variation>R</variation>
    <location>
        <position position="98"/>
    </location>
</feature>
<feature type="sequence variant">
    <original>L</original>
    <variation>M</variation>
    <location>
        <position position="260"/>
    </location>
</feature>
<feature type="sequence variant">
    <original>E</original>
    <variation>K</variation>
    <location>
        <position position="475"/>
    </location>
</feature>
<feature type="sequence variant">
    <original>Q</original>
    <variation>L</variation>
    <location>
        <position position="523"/>
    </location>
</feature>
<feature type="sequence variant">
    <original>I</original>
    <variation>V</variation>
    <location>
        <position position="846"/>
    </location>
</feature>
<feature type="sequence variant">
    <original>M</original>
    <variation>L</variation>
    <location>
        <position position="1349"/>
    </location>
</feature>
<feature type="sequence variant">
    <original>I</original>
    <variation>V</variation>
    <location>
        <position position="1389"/>
    </location>
</feature>
<feature type="sequence variant">
    <original>R</original>
    <variation>Q</variation>
    <location>
        <position position="1703"/>
    </location>
</feature>
<feature type="sequence variant">
    <original>E</original>
    <variation>G</variation>
    <location>
        <position position="1925"/>
    </location>
</feature>
<feature type="sequence variant">
    <original>Q</original>
    <variation>H</variation>
    <location>
        <position position="1978"/>
    </location>
</feature>
<feature type="strand" evidence="14">
    <location>
        <begin position="33"/>
        <end position="35"/>
    </location>
</feature>
<feature type="helix" evidence="14">
    <location>
        <begin position="36"/>
        <end position="38"/>
    </location>
</feature>
<feature type="helix" evidence="14">
    <location>
        <begin position="51"/>
        <end position="54"/>
    </location>
</feature>
<feature type="strand" evidence="14">
    <location>
        <begin position="57"/>
        <end position="59"/>
    </location>
</feature>
<feature type="strand" evidence="14">
    <location>
        <begin position="83"/>
        <end position="87"/>
    </location>
</feature>
<feature type="strand" evidence="14">
    <location>
        <begin position="90"/>
        <end position="96"/>
    </location>
</feature>
<feature type="helix" evidence="14">
    <location>
        <begin position="103"/>
        <end position="105"/>
    </location>
</feature>
<feature type="turn" evidence="14">
    <location>
        <begin position="113"/>
        <end position="115"/>
    </location>
</feature>
<feature type="helix" evidence="14">
    <location>
        <begin position="126"/>
        <end position="128"/>
    </location>
</feature>
<feature type="strand" evidence="14">
    <location>
        <begin position="138"/>
        <end position="140"/>
    </location>
</feature>
<feature type="strand" evidence="14">
    <location>
        <begin position="147"/>
        <end position="151"/>
    </location>
</feature>
<feature type="helix" evidence="14">
    <location>
        <begin position="153"/>
        <end position="155"/>
    </location>
</feature>
<feature type="helix" evidence="14">
    <location>
        <begin position="159"/>
        <end position="165"/>
    </location>
</feature>
<feature type="strand" evidence="14">
    <location>
        <begin position="168"/>
        <end position="180"/>
    </location>
</feature>
<feature type="strand" evidence="14">
    <location>
        <begin position="188"/>
        <end position="197"/>
    </location>
</feature>
<feature type="strand" evidence="14">
    <location>
        <begin position="203"/>
        <end position="205"/>
    </location>
</feature>
<feature type="helix" evidence="14">
    <location>
        <begin position="213"/>
        <end position="216"/>
    </location>
</feature>
<feature type="helix" evidence="14">
    <location>
        <begin position="219"/>
        <end position="221"/>
    </location>
</feature>
<feature type="turn" evidence="14">
    <location>
        <begin position="238"/>
        <end position="244"/>
    </location>
</feature>
<feature type="helix" evidence="14">
    <location>
        <begin position="247"/>
        <end position="252"/>
    </location>
</feature>
<feature type="strand" evidence="14">
    <location>
        <begin position="253"/>
        <end position="259"/>
    </location>
</feature>
<feature type="turn" evidence="14">
    <location>
        <begin position="260"/>
        <end position="262"/>
    </location>
</feature>
<feature type="strand" evidence="14">
    <location>
        <begin position="264"/>
        <end position="270"/>
    </location>
</feature>
<feature type="strand" evidence="14">
    <location>
        <begin position="275"/>
        <end position="279"/>
    </location>
</feature>
<feature type="strand" evidence="14">
    <location>
        <begin position="281"/>
        <end position="284"/>
    </location>
</feature>
<feature type="strand" evidence="14">
    <location>
        <begin position="286"/>
        <end position="298"/>
    </location>
</feature>
<feature type="strand" evidence="14">
    <location>
        <begin position="307"/>
        <end position="323"/>
    </location>
</feature>
<feature type="turn" evidence="14">
    <location>
        <begin position="339"/>
        <end position="342"/>
    </location>
</feature>
<feature type="strand" evidence="14">
    <location>
        <begin position="354"/>
        <end position="356"/>
    </location>
</feature>
<feature type="turn" evidence="14">
    <location>
        <begin position="374"/>
        <end position="379"/>
    </location>
</feature>
<feature type="strand" evidence="14">
    <location>
        <begin position="390"/>
        <end position="392"/>
    </location>
</feature>
<feature type="helix" evidence="14">
    <location>
        <begin position="395"/>
        <end position="398"/>
    </location>
</feature>
<feature type="strand" evidence="14">
    <location>
        <begin position="399"/>
        <end position="402"/>
    </location>
</feature>
<feature type="strand" evidence="14">
    <location>
        <begin position="410"/>
        <end position="415"/>
    </location>
</feature>
<feature type="helix" evidence="14">
    <location>
        <begin position="421"/>
        <end position="423"/>
    </location>
</feature>
<feature type="helix" evidence="14">
    <location>
        <begin position="427"/>
        <end position="432"/>
    </location>
</feature>
<feature type="strand" evidence="14">
    <location>
        <begin position="435"/>
        <end position="440"/>
    </location>
</feature>
<feature type="strand" evidence="14">
    <location>
        <begin position="442"/>
        <end position="448"/>
    </location>
</feature>
<feature type="strand" evidence="14">
    <location>
        <begin position="457"/>
        <end position="463"/>
    </location>
</feature>
<feature type="helix" evidence="14">
    <location>
        <begin position="473"/>
        <end position="476"/>
    </location>
</feature>
<feature type="strand" evidence="14">
    <location>
        <begin position="479"/>
        <end position="485"/>
    </location>
</feature>
<feature type="strand" evidence="14">
    <location>
        <begin position="487"/>
        <end position="489"/>
    </location>
</feature>
<feature type="strand" evidence="14">
    <location>
        <begin position="491"/>
        <end position="496"/>
    </location>
</feature>
<feature type="strand" evidence="14">
    <location>
        <begin position="501"/>
        <end position="503"/>
    </location>
</feature>
<feature type="strand" evidence="14">
    <location>
        <begin position="505"/>
        <end position="508"/>
    </location>
</feature>
<feature type="helix" evidence="14">
    <location>
        <begin position="511"/>
        <end position="513"/>
    </location>
</feature>
<feature type="strand" evidence="14">
    <location>
        <begin position="517"/>
        <end position="524"/>
    </location>
</feature>
<feature type="strand" evidence="14">
    <location>
        <begin position="536"/>
        <end position="544"/>
    </location>
</feature>
<feature type="strand" evidence="14">
    <location>
        <begin position="549"/>
        <end position="553"/>
    </location>
</feature>
<feature type="strand" evidence="14">
    <location>
        <begin position="585"/>
        <end position="587"/>
    </location>
</feature>
<feature type="helix" evidence="14">
    <location>
        <begin position="604"/>
        <end position="606"/>
    </location>
</feature>
<feature type="helix" evidence="14">
    <location>
        <begin position="614"/>
        <end position="616"/>
    </location>
</feature>
<feature type="helix" evidence="14">
    <location>
        <begin position="630"/>
        <end position="632"/>
    </location>
</feature>
<feature type="helix" evidence="14">
    <location>
        <begin position="634"/>
        <end position="637"/>
    </location>
</feature>
<feature type="strand" evidence="14">
    <location>
        <begin position="642"/>
        <end position="651"/>
    </location>
</feature>
<feature type="helix" evidence="14">
    <location>
        <begin position="660"/>
        <end position="663"/>
    </location>
</feature>
<feature type="strand" evidence="14">
    <location>
        <begin position="665"/>
        <end position="669"/>
    </location>
</feature>
<feature type="strand" evidence="14">
    <location>
        <begin position="673"/>
        <end position="676"/>
    </location>
</feature>
<feature type="helix" evidence="14">
    <location>
        <begin position="677"/>
        <end position="683"/>
    </location>
</feature>
<feature type="strand" evidence="14">
    <location>
        <begin position="686"/>
        <end position="702"/>
    </location>
</feature>
<feature type="strand" evidence="14">
    <location>
        <begin position="714"/>
        <end position="720"/>
    </location>
</feature>
<feature type="helix" evidence="14">
    <location>
        <begin position="733"/>
        <end position="736"/>
    </location>
</feature>
<feature type="strand" evidence="14">
    <location>
        <begin position="738"/>
        <end position="740"/>
    </location>
</feature>
<feature type="strand" evidence="14">
    <location>
        <begin position="742"/>
        <end position="746"/>
    </location>
</feature>
<feature type="strand" evidence="14">
    <location>
        <begin position="749"/>
        <end position="755"/>
    </location>
</feature>
<feature type="strand" evidence="14">
    <location>
        <begin position="760"/>
        <end position="766"/>
    </location>
</feature>
<feature type="strand" evidence="14">
    <location>
        <begin position="770"/>
        <end position="774"/>
    </location>
</feature>
<feature type="strand" evidence="14">
    <location>
        <begin position="776"/>
        <end position="778"/>
    </location>
</feature>
<feature type="helix" evidence="14">
    <location>
        <begin position="784"/>
        <end position="786"/>
    </location>
</feature>
<feature type="strand" evidence="14">
    <location>
        <begin position="790"/>
        <end position="795"/>
    </location>
</feature>
<feature type="strand" evidence="14">
    <location>
        <begin position="804"/>
        <end position="822"/>
    </location>
</feature>
<sequence>MGAQVSTQKSGSHENQNILTNGSNQTFTVINYYKDAASSSSAGQSFSMDPSKFTEPVKDLMLKGAPALNSPNVEACGYSDRVQQITLGNSTITTQEAANAIVCYAEWPEYLSDNDASDVNKTSKPDISVCRFYTLDSKTWKATSKGWCWKLPDALKDMGVFGQNMFYHSLGRTGYTIHVQCNATKFHSGCLLVVVIPEHQLASHEGGTVSVKYKYTHPGDRGIDLDTVEVAGGPTSDAIYNMDGTLLGNLLIFPHQFINLRTNNTATIVVPYINSVPIDSMTRHNNVSLMVVPIAPLNAPTGSSPTLPVTVTIAPMCTEFTGIRSRSIVPQGLPTTTLPGSGQFLTTDDRQSPSALPSYEPTPRIHIPGKVRNLLEIIQVGTLIPMNNTGTNDNVTNYLIPLHADRQNEQIFGTKLYIGDGVFKTTLLGEIAQYYTHWSGSLRISLMYTGPALSSAKIILAYTPPGTRGPEDRKEAMLGTHVVWDIGLQSTIVMTIPWTSGVQFRYTDPDTYTSAGYLSCWYQTSLILPPQTSGQVYLLSFISACPDFKLRLMKDTQTISQTDALTEGLSDELEEVIVEKTKQTLASVSSGPKHTQSVPALTANETGATLPTRPSDNVETRTTYMHFNGSETDVESFLGRAACVHVTEIKNKNAAGLDNHRKEGLFNDWKINLSSLVQLRKKLELFTYVRFDSEYTILATASQPEASSYSSNLTVQAMYVPPGAPNPKEWDDYTWQSASNPSVFFKVGETSRFSVPFVGIASAYNCFYDGYSHDDPDTPYGITVLNHMGSMAFRVVNEHDVHTTIVKIRVYHRAKHVEAWIPRAPRALPYVSIGRTNYPRDSKTIIKKRTNIKTYGLGPRFGGVFTSNVKIINYHLMTPDDHLNLVAPYPNRDLAVVATGAHGAETIPHCNCTSGVYYSRYYRKFYPIICERPTNIWIEGSSYYPSRYQAGVMKGVGPAEPGDCGGILRCIHGPIGLLTAGGGGYVCFADIRQLDFIADEQGLGDYITSLGRAFGTGFTDQISAKVCELQDVAKDFLTTKVLSKVVKMISALVIICRNHDDLVTVTATLALLGCDGSPWRFLKMYISKHFQVPYIERQANDGWFRKFNDACNAAKGLEWIANKISKLIEWIKNKVLPQAREKLEFCSKLKQLDILERQIASIHDSNPTQEKREQLFNNVLWLEQMSQKFSPLYASEAKRIRDLKNKITNYMQFKSKQRTEPVCVLIHGTPGSGKSLTTSIVGRALAEHFNSSVYSLPPDPKHFDGYQQQEVVIMDDLNQNPDGQDISMFCQMVSSVDFLPPMASLDNKGMLFTSNFVLASTNSNTLSPPTILNPEALIRRFGFDLDICMHSTYTKNGKLNAAMATSLCKDCHQPSNFKKCCPLVCGKAISLVDRVSNVRFSIDQLVTAIINDYKNKVKITDSLEVLFQGPVYKDLEIDICNTPPPECISDLLKSVDSEEVREYCKKKKWIIPQISTNIERAVNQASMIINTILMFVSTLGIVYVIYKLFAQTQGPYSGNPVHNKLKPPTLKPVVVQGPNTEFALSLLRKNILTITTEKGEFTSLGIHDRICVLPTHAQPGDNVLVNGQKIQIKDKYKLVDPDNTNLELTIIELDRNEKFRDIRGFISEDLEGLDATLVVHSNGFTNTILDVGPITMAGLINLSNTPTTRMIRYDYPTKTGQCGGVLCTTGKIFGIHVGGNGRRGFSAQLKKQYFVEKQGLIVSKQKVRDIGLNPINTPTKTKLHPSVFYNVFPGSKQPAVLNDNDPRLEVKLAESLFSKYKGNVQMEPTENMLIAVDHYAGQLMSLDISTKELTLKEALYGVDGLEPIDVTTSAGYPYVSLGIKKRDILNKETQDVEKMKFYLDKYGIDLPLVTYIKDELRSVDKVRLGKSRLIEASSLNDSVNMRMKLGNLYKAFHQNPGIITESAVGCDPDVFWSVIPCLMDGHLMAFDYSNFDASLSPVWFECLEKVLNKLGFKQPSLIQSICNTHHIFRDEIYRVEGGMPSGCSGTSIFNSMINNIIIRTLILDAYKGIDLDSLRILAYGDDLIVSYPFELDSNILAAIGKNYGLTITPPDKSDAFTKITWENITFLKRYFRPDPQFPFLIHPVMPMQDIYESIRWTRDPRNTQDHVRSLCMLAWHSGEKDYNDFITKIRTTDIGKCLNLPEYSVLRRRWLDLF</sequence>
<name>POLG_HRV3</name>
<reference key="1">
    <citation type="journal article" date="2007" name="Virol. J.">
        <title>Genome-wide diversity and selective pressure in the human rhinovirus.</title>
        <authorList>
            <person name="Kistler A.L."/>
            <person name="Webster D.R."/>
            <person name="Rouskin S."/>
            <person name="Magrini V."/>
            <person name="Credle J.J."/>
            <person name="Schnurr D.P."/>
            <person name="Boushey H.A."/>
            <person name="Mardis E.R."/>
            <person name="Li H."/>
            <person name="DeRisi J.L."/>
        </authorList>
    </citation>
    <scope>NUCLEOTIDE SEQUENCE [GENOMIC RNA]</scope>
</reference>
<reference key="2">
    <citation type="journal article" date="2007" name="BMC Genomics">
        <title>New complete genome sequences of human rhinoviruses shed light on their phylogeny and genomic features.</title>
        <authorList>
            <person name="Tapparel C."/>
            <person name="Junier T."/>
            <person name="Gerlach D."/>
            <person name="Cordey S."/>
            <person name="Van Belle S."/>
            <person name="Perrin L."/>
            <person name="Zdobnov E.M."/>
            <person name="Kaiser L."/>
        </authorList>
    </citation>
    <scope>NUCLEOTIDE SEQUENCE [GENOMIC RNA]</scope>
</reference>
<reference key="3">
    <citation type="journal article" date="1996" name="Structure">
        <title>Human rhinovirus 3 at 3.0-A resolution.</title>
        <authorList>
            <person name="Zhao R."/>
            <person name="Pevear D.C."/>
            <person name="Kremer M.J."/>
            <person name="Giranda V.L."/>
            <person name="Kofron J.A."/>
            <person name="Kuhn R.J."/>
            <person name="Rossmann M.G."/>
        </authorList>
    </citation>
    <scope>NUCLEOTIDE SEQUENCE [GENOMIC RNA] OF 1-855</scope>
    <scope>X-RAY CRYSTALLOGRAPHY (3.0 ANGSTROMS)</scope>
</reference>
<reference key="4">
    <citation type="journal article" date="2012" name="Adv. Virol.">
        <title>Productive entry pathways of human rhinoviruses.</title>
        <authorList>
            <person name="Fuchs R."/>
            <person name="Blaas D."/>
        </authorList>
    </citation>
    <scope>REVIEW</scope>
</reference>
<comment type="function">
    <molecule>Capsid protein VP1</molecule>
    <text evidence="1">Forms an icosahedral capsid of pseudo T=3 symmetry with capsid proteins VP2 and VP3 (By similarity). The capsid is 300 Angstroms in diameter, composed of 60 copies of each capsid protein and enclosing the viral positive strand RNA genome (By similarity). Capsid protein VP1 mainly forms the vertices of the capsid (By similarity). Capsid protein VP1 interacts with host cell receptor to provide virion attachment to target host cells (By similarity). This attachment induces virion internalization (By similarity). Tyrosine kinases are probably involved in the entry process (By similarity). After binding to its receptor, the capsid undergoes conformational changes (By similarity). Capsid protein VP1 N-terminus (that contains an amphipathic alpha-helix) and capsid protein VP4 are externalized (By similarity). Together, they shape a pore in the host membrane through which viral genome is translocated to host cell cytoplasm (By similarity).</text>
</comment>
<comment type="function">
    <molecule>Capsid protein VP2</molecule>
    <text evidence="1">Forms an icosahedral capsid of pseudo T=3 symmetry with capsid proteins VP2 and VP3 (By similarity). The capsid is 300 Angstroms in diameter, composed of 60 copies of each capsid protein and enclosing the viral positive strand RNA genome (By similarity).</text>
</comment>
<comment type="function">
    <molecule>Capsid protein VP3</molecule>
    <text evidence="1">Forms an icosahedral capsid of pseudo T=3 symmetry with capsid proteins VP2 and VP3 (By similarity). The capsid is 300 Angstroms in diameter, composed of 60 copies of each capsid protein and enclosing the viral positive strand RNA genome (By similarity).</text>
</comment>
<comment type="function">
    <molecule>Capsid protein VP4</molecule>
    <text evidence="1">Lies on the inner surface of the capsid shell (By similarity). After binding to the host receptor, the capsid undergoes conformational changes (By similarity). Capsid protein VP4 is released, Capsid protein VP1 N-terminus is externalized, and together, they shape a pore in the host membrane through which the viral genome is translocated into the host cell cytoplasm (By similarity).</text>
</comment>
<comment type="function">
    <molecule>Capsid protein VP0</molecule>
    <text evidence="1">Component of immature procapsids, which is cleaved into capsid proteins VP4 and VP2 after maturation (By similarity). Allows the capsid to remain inactive before the maturation step (By similarity).</text>
</comment>
<comment type="function">
    <molecule>Protease 2A</molecule>
    <text evidence="1 2">Cysteine protease that cleaves viral polyprotein and specific host proteins (By similarity). It is responsible for the autocatalytic cleavage between the P1 and P2 regions, which is the first cleavage occurring in the polyprotein (By similarity). Also cleaves the host translation initiation factor EIF4G1, in order to shut down the capped cellular mRNA translation (By similarity). Inhibits the host nucleus-cytoplasm protein and RNA trafficking by cleaving host members of the nuclear pores (By similarity). Counteracts stress granule formation probably by antagonizing its assembly or promoting its dissassembly (By similarity).</text>
</comment>
<comment type="function">
    <molecule>Protein 2B</molecule>
    <text evidence="1">Plays an essential role in the virus replication cycle by acting as a viroporin. Creates a pore in the host endoplasmic reticulum and as a consequence releases Ca2+ in the cytoplasm of infected cell. In turn, high levels of cytoplasmic calcium may trigger membrane trafficking and transport of viral ER-associated proteins to viroplasms, sites of viral genome replication.</text>
</comment>
<comment type="function">
    <molecule>Protein 2C</molecule>
    <text evidence="1">Induces and associates with structural rearrangements of intracellular membranes. Displays RNA-binding, nucleotide binding and NTPase activities. May play a role in virion morphogenesis and viral RNA encapsidation by interacting with the capsid protein VP3.</text>
</comment>
<comment type="function">
    <molecule>Protein 3AB</molecule>
    <text evidence="1">Localizes the viral replication complex to the surface of membranous vesicles. Together with protein 3CD binds the Cis-Active RNA Element (CRE) which is involved in RNA synthesis initiation. Acts as a cofactor to stimulate the activity of 3D polymerase, maybe through a nucleid acid chaperone activity.</text>
</comment>
<comment type="function">
    <molecule>Protein 3A</molecule>
    <text evidence="1">Localizes the viral replication complex to the surface of membranous vesicles (By similarity). It inhibits host cell endoplasmic reticulum-to-Golgi apparatus transport and causes the disassembly of the Golgi complex, possibly through GBF1 interaction (By similarity). This would result in depletion of MHC, trail receptors and IFN receptors at the host cell surface (By similarity). Plays an essential role in viral RNA replication by recruiting ACBD3 and PI4KB at the viral replication sites, thereby allowing the formation of the rearranged membranous structures where viral replication takes place (By similarity).</text>
</comment>
<comment type="function">
    <molecule>Viral protein genome-linked</molecule>
    <text evidence="1">Acts as a primer for viral RNA replication and remains covalently bound to viral genomic RNA. VPg is uridylylated prior to priming replication into VPg-pUpU. The oriI viral genomic sequence may act as a template for this. The VPg-pUpU is then used as primer on the genomic RNA poly(A) by the RNA-dependent RNA polymerase to replicate the viral genome. During genome replication, the VPg-RNA linkage is removed by the host TDP2, thereby accelerating replication. During the late stage of the replication cycle, host TDP2 is excluded from sites of viral RNA synthesis and encapsidation, allowing for the generation of progeny virions.</text>
</comment>
<comment type="function">
    <molecule>Protein 3CD</molecule>
    <text evidence="1">Involved in the viral replication complex and viral polypeptide maturation. It exhibits protease activity with a specificity and catalytic efficiency that is different from protease 3C. Protein 3CD lacks polymerase activity. Protein 3CD binds to the 5'UTR of the viral genome.</text>
</comment>
<comment type="function">
    <molecule>RNA-directed RNA polymerase</molecule>
    <text evidence="1">Replicates the viral genomic RNA on the surface of intracellular membranes. May form linear arrays of subunits that propagate along a strong head-to-tail interaction called interface-I. Covalently attaches UMP to a tyrosine of VPg, which is used to prime RNA synthesis. The positive stranded RNA genome is first replicated at virus induced membranous vesicles, creating a dsRNA genomic replication form. This dsRNA is then used as template to synthesize positive stranded RNA genomes. ss(+)RNA genomes are either translated, replicated or encapsidated.</text>
</comment>
<comment type="function">
    <molecule>Protease 3C</molecule>
    <text evidence="1 3">Major viral protease that mediates proteolytic processing of the polyprotein (By similarity). Cleaves host EIF5B, contributing to host translation shutoff (By similarity). Also cleaves host PABPC1, contributing to host translation shutoff (By similarity). Cleaves host NLRP1, triggers host N-glycine-mediated degradation of the autoinhibitory NLRP1 N-terminal fragment (By similarity).</text>
</comment>
<comment type="catalytic activity">
    <molecule>Protein 2C</molecule>
    <reaction evidence="1">
        <text>a ribonucleoside 5'-triphosphate + H2O = a ribonucleoside 5'-diphosphate + phosphate + H(+)</text>
        <dbReference type="Rhea" id="RHEA:23680"/>
        <dbReference type="ChEBI" id="CHEBI:15377"/>
        <dbReference type="ChEBI" id="CHEBI:15378"/>
        <dbReference type="ChEBI" id="CHEBI:43474"/>
        <dbReference type="ChEBI" id="CHEBI:57930"/>
        <dbReference type="ChEBI" id="CHEBI:61557"/>
        <dbReference type="EC" id="3.6.1.15"/>
    </reaction>
</comment>
<comment type="catalytic activity">
    <molecule>Protease 2A</molecule>
    <reaction evidence="1">
        <text>Selective cleavage of Tyr-|-Gly bond in the picornavirus polyprotein.</text>
        <dbReference type="EC" id="3.4.22.29"/>
    </reaction>
</comment>
<comment type="catalytic activity">
    <molecule>RNA-directed RNA polymerase</molecule>
    <reaction evidence="9">
        <text>RNA(n) + a ribonucleoside 5'-triphosphate = RNA(n+1) + diphosphate</text>
        <dbReference type="Rhea" id="RHEA:21248"/>
        <dbReference type="Rhea" id="RHEA-COMP:14527"/>
        <dbReference type="Rhea" id="RHEA-COMP:17342"/>
        <dbReference type="ChEBI" id="CHEBI:33019"/>
        <dbReference type="ChEBI" id="CHEBI:61557"/>
        <dbReference type="ChEBI" id="CHEBI:140395"/>
        <dbReference type="EC" id="2.7.7.48"/>
    </reaction>
</comment>
<comment type="catalytic activity">
    <molecule>Protease 3C</molecule>
    <reaction evidence="11">
        <text>Selective cleavage of Gln-|-Gly bond in the poliovirus polyprotein. In other picornavirus reactions Glu may be substituted for Gln, and Ser or Thr for Gly.</text>
        <dbReference type="EC" id="3.4.22.28"/>
    </reaction>
</comment>
<comment type="cofactor">
    <molecule>RNA-directed RNA polymerase</molecule>
    <cofactor evidence="1">
        <name>Mg(2+)</name>
        <dbReference type="ChEBI" id="CHEBI:18420"/>
    </cofactor>
    <text evidence="1 4">Binds 2 magnesium ions that constitute a dinuclear catalytic metal center (By similarity). The magnesium ions are not prebound but only present for catalysis (By similarity). Requires the presence of 3CDpro or 3CPro (By similarity).</text>
</comment>
<comment type="activity regulation">
    <molecule>RNA-directed RNA polymerase</molecule>
    <text evidence="1">Replication or transcription is subject to high level of random mutations by the nucleotide analog ribavirin.</text>
</comment>
<comment type="subunit">
    <molecule>Capsid protein VP0</molecule>
    <text evidence="1">Interacts with capsid protein VP1 and capsid protein VP3 to form heterotrimeric protomers.</text>
</comment>
<comment type="subunit">
    <molecule>Capsid protein VP1</molecule>
    <text evidence="1">Interacts with capsid protein VP0, and capsid protein VP3 to form heterotrimeric protomers (By similarity). Five protomers subsequently associate to form pentamers which serve as building blocks for the capsid (By similarity). Interacts with capsid protein VP2, capsid protein VP3 and capsid protein VP4 following cleavage of capsid protein VP0 (By similarity).</text>
</comment>
<comment type="subunit">
    <molecule>Capsid protein VP2</molecule>
    <text evidence="1">Interacts with capsid protein VP1 and capsid protein VP3 in the mature capsid.</text>
</comment>
<comment type="subunit">
    <molecule>Capsid protein VP3</molecule>
    <text evidence="1">Interacts with capsid protein VP0 and capsid protein VP1 to form heterotrimeric protomers (By similarity). Five protomers subsequently associate to form pentamers which serve as building blocks for the capsid (By similarity). Interacts with capsid protein VP4 in the mature capsid (By similarity). Interacts with protein 2C; this interaction may be important for virion morphogenesis (By similarity).</text>
</comment>
<comment type="subunit">
    <molecule>Capsid protein VP4</molecule>
    <text evidence="1">Interacts with capsid protein VP1 and capsid protein VP3.</text>
</comment>
<comment type="subunit">
    <molecule>Protease 2A</molecule>
    <text evidence="5">Homodimer.</text>
</comment>
<comment type="subunit">
    <molecule>Protein 2C</molecule>
    <text evidence="1">Homohexamer; forms a hexameric ring structure with 6-fold symmetry characteristic of AAA+ ATPases (By similarity). Interacts (via N-terminus) with host RTN3 (via reticulon domain); this interaction is important for viral replication (By similarity). Interacts with capsid protein VP3; this interaction may be important for virion morphogenesis (By similarity).</text>
</comment>
<comment type="subunit">
    <molecule>Protein 3AB</molecule>
    <text evidence="1">Interacts with protein 3CD.</text>
</comment>
<comment type="subunit">
    <molecule>Protein 3A</molecule>
    <text evidence="1">Homodimer (By similarity). Interacts with host GBF1 (By similarity). Interacts (via GOLD domain) with host ACBD3 (via GOLD domain); this interaction allows the formation of a viral protein 3A/ACBD3 heterotetramer with a 2:2 stoichiometry, which will stimulate the recruitment of host PI4KB in order to synthesize PI4P at the viral RNA replication sites (By similarity).</text>
</comment>
<comment type="subunit">
    <molecule>Viral protein genome-linked</molecule>
    <text evidence="1">Interacts with RNA-directed RNA polymerase.</text>
</comment>
<comment type="subunit">
    <molecule>Protein 3CD</molecule>
    <text evidence="1">Interacts with protein 3AB and with RNA-directed RNA polymerase.</text>
</comment>
<comment type="subunit">
    <molecule>RNA-directed RNA polymerase</molecule>
    <text evidence="1">Interacts with Viral protein genome-linked and with protein 3CD.</text>
</comment>
<comment type="subcellular location">
    <molecule>Capsid protein VP0</molecule>
    <subcellularLocation>
        <location>Virion</location>
    </subcellularLocation>
    <subcellularLocation>
        <location evidence="13">Host cytoplasm</location>
    </subcellularLocation>
</comment>
<comment type="subcellular location">
    <molecule>Capsid protein VP4</molecule>
    <subcellularLocation>
        <location>Virion</location>
    </subcellularLocation>
</comment>
<comment type="subcellular location">
    <molecule>Capsid protein VP2</molecule>
    <subcellularLocation>
        <location evidence="1">Virion</location>
    </subcellularLocation>
    <subcellularLocation>
        <location evidence="13">Host cytoplasm</location>
    </subcellularLocation>
</comment>
<comment type="subcellular location">
    <molecule>Capsid protein VP3</molecule>
    <subcellularLocation>
        <location evidence="1">Virion</location>
    </subcellularLocation>
    <subcellularLocation>
        <location evidence="13">Host cytoplasm</location>
    </subcellularLocation>
</comment>
<comment type="subcellular location">
    <molecule>Capsid protein VP1</molecule>
    <subcellularLocation>
        <location evidence="1">Virion</location>
    </subcellularLocation>
    <subcellularLocation>
        <location evidence="13">Host cytoplasm</location>
    </subcellularLocation>
</comment>
<comment type="subcellular location">
    <molecule>Protein 2B</molecule>
    <subcellularLocation>
        <location evidence="13">Host cytoplasmic vesicle membrane</location>
        <topology evidence="13">Peripheral membrane protein</topology>
        <orientation evidence="13">Cytoplasmic side</orientation>
    </subcellularLocation>
    <text>Probably localizes to the surface of intracellular membrane vesicles that are induced after virus infection as the site for viral RNA replication. These vesicles are derived from the endoplasmic reticulum.</text>
</comment>
<comment type="subcellular location">
    <molecule>Protein 2C</molecule>
    <subcellularLocation>
        <location evidence="13">Host cytoplasmic vesicle membrane</location>
        <topology evidence="13">Peripheral membrane protein</topology>
        <orientation evidence="13">Cytoplasmic side</orientation>
    </subcellularLocation>
    <text>Probably localizes to the surface of intracellular membrane vesicles that are induced after virus infection as the site for viral RNA replication. These vesicles are derived from the endoplasmic reticulum.</text>
</comment>
<comment type="subcellular location">
    <molecule>Protein 3A</molecule>
    <subcellularLocation>
        <location evidence="13">Host cytoplasmic vesicle membrane</location>
        <topology evidence="13">Peripheral membrane protein</topology>
        <orientation evidence="13">Cytoplasmic side</orientation>
    </subcellularLocation>
    <text>Probably localizes to the surface of intracellular membrane vesicles that are induced after virus infection as the site for viral RNA replication. These vesicles are derived from the endoplasmic reticulum.</text>
</comment>
<comment type="subcellular location">
    <molecule>Protein 3AB</molecule>
    <subcellularLocation>
        <location evidence="13">Host cytoplasmic vesicle membrane</location>
        <topology evidence="13">Peripheral membrane protein</topology>
        <orientation evidence="13">Cytoplasmic side</orientation>
    </subcellularLocation>
    <text>Probably localizes to the surface of intracellular membrane vesicles that are induced after virus infection as the site for viral RNA replication. These vesicles are derived from the endoplasmic reticulum.</text>
</comment>
<comment type="subcellular location">
    <molecule>Viral protein genome-linked</molecule>
    <subcellularLocation>
        <location evidence="1">Virion</location>
    </subcellularLocation>
    <subcellularLocation>
        <location evidence="6">Host cytoplasm</location>
    </subcellularLocation>
</comment>
<comment type="subcellular location">
    <molecule>Protease 3C</molecule>
    <subcellularLocation>
        <location>Host cytoplasm</location>
    </subcellularLocation>
</comment>
<comment type="subcellular location">
    <molecule>Protein 3CD</molecule>
    <subcellularLocation>
        <location evidence="1">Host nucleus</location>
    </subcellularLocation>
    <subcellularLocation>
        <location evidence="1">Host cytoplasm</location>
    </subcellularLocation>
    <subcellularLocation>
        <location evidence="13">Host cytoplasmic vesicle membrane</location>
        <topology evidence="13">Peripheral membrane protein</topology>
        <orientation evidence="13">Cytoplasmic side</orientation>
    </subcellularLocation>
    <text>Probably localizes to the surface of intracellular membrane vesicles that are induced after virus infection as the site for viral RNA replication. These vesicles are derived from the endoplasmic reticulum.</text>
</comment>
<comment type="subcellular location">
    <molecule>RNA-directed RNA polymerase</molecule>
    <subcellularLocation>
        <location evidence="13">Host cytoplasmic vesicle membrane</location>
        <topology evidence="13">Peripheral membrane protein</topology>
        <orientation evidence="13">Cytoplasmic side</orientation>
    </subcellularLocation>
    <text>Probably localizes to the surface of intracellular membrane vesicles that are induced after virus infection as the site for viral RNA replication. These vesicles are derived from the endoplasmic reticulum.</text>
</comment>
<comment type="domain">
    <molecule>Protein 2C</molecule>
    <text evidence="1">The N-terminus has membrane-binding (By similarity). The N-terminus also displays RNA-binding properties (By similarity). The N-terminus is involved in oligomerization (By similarity). The central part contains an ATPase domain and a C4-type zinc-finger (By similarity). The C-terminus is involved in RNA-binding (By similarity). The extreme C-terminus contains a region involved in oligomerization (By similarity).</text>
</comment>
<comment type="PTM">
    <molecule>Genome polyprotein</molecule>
    <text evidence="1">Specific enzymatic cleavages in vivo by the viral proteases yield processing intermediates and the mature proteins.</text>
</comment>
<comment type="PTM">
    <molecule>Capsid protein VP0</molecule>
    <text evidence="1">Myristoylation is required for the formation of pentamers during virus assembly. Further assembly of 12 pentamers and a molecule of genomic RNA generates the provirion.</text>
</comment>
<comment type="PTM">
    <molecule>Capsid protein VP0</molecule>
    <text evidence="1">During virion maturation, immature virions are rendered infectious following cleavage of VP0 into VP4 and VP2. This maturation seems to be an autocatalytic event triggered by the presence of RNA in the capsid and it is followed by a conformational change infectious virion.</text>
</comment>
<comment type="PTM">
    <molecule>Capsid protein VP4</molecule>
    <text evidence="1">Myristoylation is required during RNA encapsidation and formation of the mature virus particle.</text>
</comment>
<comment type="PTM">
    <molecule>Viral protein genome-linked</molecule>
    <text evidence="1">VPg is uridylylated by the polymerase into VPg-pUpU. This acts as a nucleotide-peptide primer for the genomic RNA replication.</text>
</comment>
<comment type="similarity">
    <text evidence="13">Belongs to the picornaviruses polyprotein family.</text>
</comment>
<comment type="online information" name="Virus Particle ExploreR db">
    <link uri="https://viperdb.org/Info_Page.php?VDB=1rhi"/>
    <text>Icosahedral capsid structure</text>
</comment>
<keyword id="KW-0002">3D-structure</keyword>
<keyword id="KW-1072">Activation of host autophagy by virus</keyword>
<keyword id="KW-0067">ATP-binding</keyword>
<keyword id="KW-0068">Autocatalytic cleavage</keyword>
<keyword id="KW-0167">Capsid protein</keyword>
<keyword id="KW-0191">Covalent protein-RNA linkage</keyword>
<keyword id="KW-0235">DNA replication</keyword>
<keyword id="KW-1262">Eukaryotic host gene expression shutoff by virus</keyword>
<keyword id="KW-1193">Eukaryotic host translation shutoff by virus</keyword>
<keyword id="KW-0347">Helicase</keyword>
<keyword id="KW-1035">Host cytoplasm</keyword>
<keyword id="KW-1036">Host cytoplasmic vesicle</keyword>
<keyword id="KW-1190">Host gene expression shutoff by virus</keyword>
<keyword id="KW-1043">Host membrane</keyword>
<keyword id="KW-1192">Host mRNA suppression by virus</keyword>
<keyword id="KW-1048">Host nucleus</keyword>
<keyword id="KW-0945">Host-virus interaction</keyword>
<keyword id="KW-0378">Hydrolase</keyword>
<keyword id="KW-1090">Inhibition of host innate immune response by virus</keyword>
<keyword id="KW-1099">Inhibition of host mRNA nuclear export by virus</keyword>
<keyword id="KW-1088">Inhibition of host RIG-I by virus</keyword>
<keyword id="KW-1113">Inhibition of host RLR pathway by virus</keyword>
<keyword id="KW-0407">Ion channel</keyword>
<keyword id="KW-0406">Ion transport</keyword>
<keyword id="KW-0449">Lipoprotein</keyword>
<keyword id="KW-0460">Magnesium</keyword>
<keyword id="KW-0472">Membrane</keyword>
<keyword id="KW-0479">Metal-binding</keyword>
<keyword id="KW-0519">Myristate</keyword>
<keyword id="KW-0547">Nucleotide-binding</keyword>
<keyword id="KW-0548">Nucleotidyltransferase</keyword>
<keyword id="KW-0597">Phosphoprotein</keyword>
<keyword id="KW-1172">Pore-mediated penetration of viral genome into host cell</keyword>
<keyword id="KW-0645">Protease</keyword>
<keyword id="KW-0677">Repeat</keyword>
<keyword id="KW-0694">RNA-binding</keyword>
<keyword id="KW-0696">RNA-directed RNA polymerase</keyword>
<keyword id="KW-1143">T=pseudo3 icosahedral capsid protein</keyword>
<keyword id="KW-0788">Thiol protease</keyword>
<keyword id="KW-0808">Transferase</keyword>
<keyword id="KW-0813">Transport</keyword>
<keyword id="KW-1161">Viral attachment to host cell</keyword>
<keyword id="KW-0899">Viral immunoevasion</keyword>
<keyword id="KW-1182">Viral ion channel</keyword>
<keyword id="KW-1162">Viral penetration into host cytoplasm</keyword>
<keyword id="KW-0693">Viral RNA replication</keyword>
<keyword id="KW-0946">Virion</keyword>
<keyword id="KW-1164">Virus endocytosis by host</keyword>
<keyword id="KW-1160">Virus entry into host cell</keyword>
<keyword id="KW-0862">Zinc</keyword>
<keyword id="KW-0863">Zinc-finger</keyword>
<protein>
    <recommendedName>
        <fullName>Genome polyprotein</fullName>
    </recommendedName>
    <component>
        <recommendedName>
            <fullName>P1</fullName>
        </recommendedName>
    </component>
    <component>
        <recommendedName>
            <fullName>Capsid protein VP0</fullName>
        </recommendedName>
        <alternativeName>
            <fullName>VP4-VP2</fullName>
        </alternativeName>
    </component>
    <component>
        <recommendedName>
            <fullName>Capsid protein VP4</fullName>
        </recommendedName>
        <alternativeName>
            <fullName>P1A</fullName>
        </alternativeName>
        <alternativeName>
            <fullName>Virion protein 4</fullName>
        </alternativeName>
    </component>
    <component>
        <recommendedName>
            <fullName>Capsid protein VP2</fullName>
        </recommendedName>
        <alternativeName>
            <fullName>P1B</fullName>
        </alternativeName>
        <alternativeName>
            <fullName>Virion protein 2</fullName>
        </alternativeName>
    </component>
    <component>
        <recommendedName>
            <fullName>Capsid protein VP3</fullName>
        </recommendedName>
        <alternativeName>
            <fullName>P1C</fullName>
        </alternativeName>
        <alternativeName>
            <fullName>Virion protein 3</fullName>
        </alternativeName>
    </component>
    <component>
        <recommendedName>
            <fullName>Capsid protein VP1</fullName>
        </recommendedName>
        <alternativeName>
            <fullName>P1D</fullName>
        </alternativeName>
        <alternativeName>
            <fullName>Virion protein 1</fullName>
        </alternativeName>
    </component>
    <component>
        <recommendedName>
            <fullName>P2</fullName>
        </recommendedName>
    </component>
    <component>
        <recommendedName>
            <fullName>Protease 2A</fullName>
            <shortName>P2A</shortName>
            <ecNumber evidence="1">3.4.22.29</ecNumber>
        </recommendedName>
        <alternativeName>
            <fullName>Picornain 2A</fullName>
        </alternativeName>
        <alternativeName>
            <fullName>Protein 2A</fullName>
        </alternativeName>
    </component>
    <component>
        <recommendedName>
            <fullName>Protein 2B</fullName>
            <shortName>P2B</shortName>
        </recommendedName>
    </component>
    <component>
        <recommendedName>
            <fullName>Protein 2C</fullName>
            <shortName>P2C</shortName>
            <ecNumber evidence="1">3.6.1.15</ecNumber>
        </recommendedName>
    </component>
    <component>
        <recommendedName>
            <fullName>P3</fullName>
        </recommendedName>
    </component>
    <component>
        <recommendedName>
            <fullName>Protein 3AB</fullName>
        </recommendedName>
    </component>
    <component>
        <recommendedName>
            <fullName>Protein 3A</fullName>
            <shortName>P3A</shortName>
        </recommendedName>
    </component>
    <component>
        <recommendedName>
            <fullName>Viral protein genome-linked</fullName>
            <shortName>VPg</shortName>
        </recommendedName>
        <alternativeName>
            <fullName>Protein 3B</fullName>
            <shortName>P3B</shortName>
        </alternativeName>
    </component>
    <component>
        <recommendedName>
            <fullName>Protein 3CD</fullName>
            <ecNumber>3.4.22.28</ecNumber>
        </recommendedName>
    </component>
    <component>
        <recommendedName>
            <fullName evidence="11">Protease 3C</fullName>
            <ecNumber evidence="11">3.4.22.28</ecNumber>
        </recommendedName>
        <alternativeName>
            <fullName evidence="11">Picornain 3C</fullName>
            <shortName evidence="11">P3C</shortName>
        </alternativeName>
    </component>
    <component>
        <recommendedName>
            <fullName evidence="9">RNA-directed RNA polymerase</fullName>
            <shortName>RdRp</shortName>
            <ecNumber evidence="9">2.7.7.48</ecNumber>
        </recommendedName>
        <alternativeName>
            <fullName>3D polymerase</fullName>
            <shortName>3Dpol</shortName>
        </alternativeName>
        <alternativeName>
            <fullName>Protein 3D</fullName>
            <shortName>3D</shortName>
        </alternativeName>
    </component>
</protein>
<dbReference type="EC" id="3.4.22.29" evidence="1"/>
<dbReference type="EC" id="3.6.1.15" evidence="1"/>
<dbReference type="EC" id="3.4.22.28" evidence="11"/>
<dbReference type="EC" id="2.7.7.48" evidence="9"/>
<dbReference type="EMBL" id="DQ473485">
    <property type="protein sequence ID" value="ABF51179.1"/>
    <property type="molecule type" value="Genomic_RNA"/>
</dbReference>
<dbReference type="EMBL" id="EF173422">
    <property type="protein sequence ID" value="ABO69378.1"/>
    <property type="molecule type" value="Genomic_RNA"/>
</dbReference>
<dbReference type="EMBL" id="U60874">
    <property type="protein sequence ID" value="AAB05616.1"/>
    <property type="molecule type" value="Genomic_RNA"/>
</dbReference>
<dbReference type="RefSeq" id="YP_009505609.1">
    <property type="nucleotide sequence ID" value="NC_038312.1"/>
</dbReference>
<dbReference type="PDB" id="1RHI">
    <property type="method" value="X-ray"/>
    <property type="resolution" value="3.00 A"/>
    <property type="chains" value="1=568-855, 2=70-331, 3=332-567, 4=2-69"/>
</dbReference>
<dbReference type="PDBsum" id="1RHI"/>
<dbReference type="SMR" id="Q82081"/>
<dbReference type="MEROPS" id="C03.013"/>
<dbReference type="MEROPS" id="C03.020"/>
<dbReference type="MEROPS" id="N08.001"/>
<dbReference type="GeneID" id="37616486"/>
<dbReference type="EvolutionaryTrace" id="Q82081"/>
<dbReference type="Proteomes" id="UP000013737">
    <property type="component" value="Genome"/>
</dbReference>
<dbReference type="Proteomes" id="UP000165566">
    <property type="component" value="Genome"/>
</dbReference>
<dbReference type="GO" id="GO:0044162">
    <property type="term" value="C:host cell cytoplasmic vesicle membrane"/>
    <property type="evidence" value="ECO:0007669"/>
    <property type="project" value="UniProtKB-SubCell"/>
</dbReference>
<dbReference type="GO" id="GO:0042025">
    <property type="term" value="C:host cell nucleus"/>
    <property type="evidence" value="ECO:0007669"/>
    <property type="project" value="UniProtKB-SubCell"/>
</dbReference>
<dbReference type="GO" id="GO:0016020">
    <property type="term" value="C:membrane"/>
    <property type="evidence" value="ECO:0007669"/>
    <property type="project" value="UniProtKB-KW"/>
</dbReference>
<dbReference type="GO" id="GO:0039618">
    <property type="term" value="C:T=pseudo3 icosahedral viral capsid"/>
    <property type="evidence" value="ECO:0007669"/>
    <property type="project" value="UniProtKB-KW"/>
</dbReference>
<dbReference type="GO" id="GO:0005524">
    <property type="term" value="F:ATP binding"/>
    <property type="evidence" value="ECO:0007669"/>
    <property type="project" value="UniProtKB-KW"/>
</dbReference>
<dbReference type="GO" id="GO:0015267">
    <property type="term" value="F:channel activity"/>
    <property type="evidence" value="ECO:0007669"/>
    <property type="project" value="UniProtKB-KW"/>
</dbReference>
<dbReference type="GO" id="GO:0004197">
    <property type="term" value="F:cysteine-type endopeptidase activity"/>
    <property type="evidence" value="ECO:0007669"/>
    <property type="project" value="UniProtKB-EC"/>
</dbReference>
<dbReference type="GO" id="GO:0017111">
    <property type="term" value="F:ribonucleoside triphosphate phosphatase activity"/>
    <property type="evidence" value="ECO:0007669"/>
    <property type="project" value="UniProtKB-EC"/>
</dbReference>
<dbReference type="GO" id="GO:0003723">
    <property type="term" value="F:RNA binding"/>
    <property type="evidence" value="ECO:0007669"/>
    <property type="project" value="UniProtKB-KW"/>
</dbReference>
<dbReference type="GO" id="GO:0003724">
    <property type="term" value="F:RNA helicase activity"/>
    <property type="evidence" value="ECO:0007669"/>
    <property type="project" value="InterPro"/>
</dbReference>
<dbReference type="GO" id="GO:0003968">
    <property type="term" value="F:RNA-directed RNA polymerase activity"/>
    <property type="evidence" value="ECO:0007669"/>
    <property type="project" value="UniProtKB-KW"/>
</dbReference>
<dbReference type="GO" id="GO:0005198">
    <property type="term" value="F:structural molecule activity"/>
    <property type="evidence" value="ECO:0007669"/>
    <property type="project" value="InterPro"/>
</dbReference>
<dbReference type="GO" id="GO:0008270">
    <property type="term" value="F:zinc ion binding"/>
    <property type="evidence" value="ECO:0007669"/>
    <property type="project" value="UniProtKB-KW"/>
</dbReference>
<dbReference type="GO" id="GO:0006260">
    <property type="term" value="P:DNA replication"/>
    <property type="evidence" value="ECO:0007669"/>
    <property type="project" value="UniProtKB-KW"/>
</dbReference>
<dbReference type="GO" id="GO:0006351">
    <property type="term" value="P:DNA-templated transcription"/>
    <property type="evidence" value="ECO:0007669"/>
    <property type="project" value="InterPro"/>
</dbReference>
<dbReference type="GO" id="GO:0075509">
    <property type="term" value="P:endocytosis involved in viral entry into host cell"/>
    <property type="evidence" value="ECO:0007669"/>
    <property type="project" value="UniProtKB-KW"/>
</dbReference>
<dbReference type="GO" id="GO:0034220">
    <property type="term" value="P:monoatomic ion transmembrane transport"/>
    <property type="evidence" value="ECO:0007669"/>
    <property type="project" value="UniProtKB-KW"/>
</dbReference>
<dbReference type="GO" id="GO:0006508">
    <property type="term" value="P:proteolysis"/>
    <property type="evidence" value="ECO:0007669"/>
    <property type="project" value="UniProtKB-KW"/>
</dbReference>
<dbReference type="GO" id="GO:0044694">
    <property type="term" value="P:symbiont genome entry into host cell via pore formation in plasma membrane"/>
    <property type="evidence" value="ECO:0007669"/>
    <property type="project" value="UniProtKB-KW"/>
</dbReference>
<dbReference type="GO" id="GO:0039520">
    <property type="term" value="P:symbiont-mediated activation of host autophagy"/>
    <property type="evidence" value="ECO:0000250"/>
    <property type="project" value="UniProtKB"/>
</dbReference>
<dbReference type="GO" id="GO:0039540">
    <property type="term" value="P:symbiont-mediated suppression of host cytoplasmic pattern recognition receptor signaling pathway via inhibition of RIG-I activity"/>
    <property type="evidence" value="ECO:0007669"/>
    <property type="project" value="UniProtKB-KW"/>
</dbReference>
<dbReference type="GO" id="GO:0039522">
    <property type="term" value="P:symbiont-mediated suppression of host mRNA export from nucleus"/>
    <property type="evidence" value="ECO:0007669"/>
    <property type="project" value="UniProtKB-KW"/>
</dbReference>
<dbReference type="GO" id="GO:0039694">
    <property type="term" value="P:viral RNA genome replication"/>
    <property type="evidence" value="ECO:0007669"/>
    <property type="project" value="InterPro"/>
</dbReference>
<dbReference type="GO" id="GO:0019062">
    <property type="term" value="P:virion attachment to host cell"/>
    <property type="evidence" value="ECO:0007669"/>
    <property type="project" value="UniProtKB-KW"/>
</dbReference>
<dbReference type="CDD" id="cd00205">
    <property type="entry name" value="rhv_like"/>
    <property type="match status" value="3"/>
</dbReference>
<dbReference type="FunFam" id="1.20.960.20:FF:000001">
    <property type="entry name" value="Genome polyprotein"/>
    <property type="match status" value="1"/>
</dbReference>
<dbReference type="FunFam" id="2.40.10.10:FF:000030">
    <property type="entry name" value="Genome polyprotein"/>
    <property type="match status" value="1"/>
</dbReference>
<dbReference type="FunFam" id="2.60.120.20:FF:000001">
    <property type="entry name" value="Genome polyprotein"/>
    <property type="match status" value="1"/>
</dbReference>
<dbReference type="FunFam" id="2.60.120.20:FF:000002">
    <property type="entry name" value="Genome polyprotein"/>
    <property type="match status" value="1"/>
</dbReference>
<dbReference type="FunFam" id="2.60.120.20:FF:000004">
    <property type="entry name" value="Genome polyprotein"/>
    <property type="match status" value="1"/>
</dbReference>
<dbReference type="FunFam" id="3.30.70.270:FF:000008">
    <property type="entry name" value="Genome polyprotein"/>
    <property type="match status" value="1"/>
</dbReference>
<dbReference type="FunFam" id="4.10.880.10:FF:000002">
    <property type="entry name" value="Genome polyprotein"/>
    <property type="match status" value="1"/>
</dbReference>
<dbReference type="Gene3D" id="1.20.960.20">
    <property type="match status" value="1"/>
</dbReference>
<dbReference type="Gene3D" id="2.60.120.20">
    <property type="match status" value="3"/>
</dbReference>
<dbReference type="Gene3D" id="3.30.70.270">
    <property type="match status" value="1"/>
</dbReference>
<dbReference type="Gene3D" id="4.10.80.10">
    <property type="entry name" value="Picornavirus coat protein VP4"/>
    <property type="match status" value="1"/>
</dbReference>
<dbReference type="Gene3D" id="6.10.20.20">
    <property type="entry name" value="Poliovirus 3A protein-like"/>
    <property type="match status" value="1"/>
</dbReference>
<dbReference type="Gene3D" id="4.10.880.10">
    <property type="entry name" value="Poliovirus 3D polymerase Domain 1 (Nucleotidyltransferase)"/>
    <property type="match status" value="2"/>
</dbReference>
<dbReference type="Gene3D" id="2.40.10.10">
    <property type="entry name" value="Trypsin-like serine proteases"/>
    <property type="match status" value="4"/>
</dbReference>
<dbReference type="InterPro" id="IPR043502">
    <property type="entry name" value="DNA/RNA_pol_sf"/>
</dbReference>
<dbReference type="InterPro" id="IPR000605">
    <property type="entry name" value="Helicase_SF3_ssDNA/RNA_vir"/>
</dbReference>
<dbReference type="InterPro" id="IPR014759">
    <property type="entry name" value="Helicase_SF3_ssRNA_vir"/>
</dbReference>
<dbReference type="InterPro" id="IPR027417">
    <property type="entry name" value="P-loop_NTPase"/>
</dbReference>
<dbReference type="InterPro" id="IPR014838">
    <property type="entry name" value="P3A"/>
</dbReference>
<dbReference type="InterPro" id="IPR036203">
    <property type="entry name" value="P3A_soluble_dom"/>
</dbReference>
<dbReference type="InterPro" id="IPR044067">
    <property type="entry name" value="PCV_3C_PRO"/>
</dbReference>
<dbReference type="InterPro" id="IPR000081">
    <property type="entry name" value="Peptidase_C3"/>
</dbReference>
<dbReference type="InterPro" id="IPR000199">
    <property type="entry name" value="Peptidase_C3A/C3B_picornavir"/>
</dbReference>
<dbReference type="InterPro" id="IPR009003">
    <property type="entry name" value="Peptidase_S1_PA"/>
</dbReference>
<dbReference type="InterPro" id="IPR043504">
    <property type="entry name" value="Peptidase_S1_PA_chymotrypsin"/>
</dbReference>
<dbReference type="InterPro" id="IPR003138">
    <property type="entry name" value="Pico_P1A"/>
</dbReference>
<dbReference type="InterPro" id="IPR036988">
    <property type="entry name" value="Pico_P1A_sf"/>
</dbReference>
<dbReference type="InterPro" id="IPR002527">
    <property type="entry name" value="Pico_P2B"/>
</dbReference>
<dbReference type="InterPro" id="IPR001676">
    <property type="entry name" value="Picornavirus_capsid"/>
</dbReference>
<dbReference type="InterPro" id="IPR043128">
    <property type="entry name" value="Rev_trsase/Diguanyl_cyclase"/>
</dbReference>
<dbReference type="InterPro" id="IPR033703">
    <property type="entry name" value="Rhv-like"/>
</dbReference>
<dbReference type="InterPro" id="IPR001205">
    <property type="entry name" value="RNA-dir_pol_C"/>
</dbReference>
<dbReference type="InterPro" id="IPR007094">
    <property type="entry name" value="RNA-dir_pol_PSvirus"/>
</dbReference>
<dbReference type="InterPro" id="IPR029053">
    <property type="entry name" value="Viral_coat"/>
</dbReference>
<dbReference type="Pfam" id="PF08727">
    <property type="entry name" value="P3A"/>
    <property type="match status" value="1"/>
</dbReference>
<dbReference type="Pfam" id="PF00548">
    <property type="entry name" value="Peptidase_C3"/>
    <property type="match status" value="1"/>
</dbReference>
<dbReference type="Pfam" id="PF02226">
    <property type="entry name" value="Pico_P1A"/>
    <property type="match status" value="1"/>
</dbReference>
<dbReference type="Pfam" id="PF00947">
    <property type="entry name" value="Pico_P2A"/>
    <property type="match status" value="1"/>
</dbReference>
<dbReference type="Pfam" id="PF01552">
    <property type="entry name" value="Pico_P2B"/>
    <property type="match status" value="1"/>
</dbReference>
<dbReference type="Pfam" id="PF00680">
    <property type="entry name" value="RdRP_1"/>
    <property type="match status" value="1"/>
</dbReference>
<dbReference type="Pfam" id="PF00073">
    <property type="entry name" value="Rhv"/>
    <property type="match status" value="3"/>
</dbReference>
<dbReference type="Pfam" id="PF00910">
    <property type="entry name" value="RNA_helicase"/>
    <property type="match status" value="1"/>
</dbReference>
<dbReference type="SUPFAM" id="SSF56672">
    <property type="entry name" value="DNA/RNA polymerases"/>
    <property type="match status" value="1"/>
</dbReference>
<dbReference type="SUPFAM" id="SSF52540">
    <property type="entry name" value="P-loop containing nucleoside triphosphate hydrolases"/>
    <property type="match status" value="1"/>
</dbReference>
<dbReference type="SUPFAM" id="SSF88633">
    <property type="entry name" value="Positive stranded ssRNA viruses"/>
    <property type="match status" value="2"/>
</dbReference>
<dbReference type="SUPFAM" id="SSF89043">
    <property type="entry name" value="Soluble domain of poliovirus core protein 3a"/>
    <property type="match status" value="1"/>
</dbReference>
<dbReference type="SUPFAM" id="SSF50494">
    <property type="entry name" value="Trypsin-like serine proteases"/>
    <property type="match status" value="2"/>
</dbReference>
<dbReference type="PROSITE" id="PS51874">
    <property type="entry name" value="PCV_3C_PRO"/>
    <property type="match status" value="1"/>
</dbReference>
<dbReference type="PROSITE" id="PS50507">
    <property type="entry name" value="RDRP_SSRNA_POS"/>
    <property type="match status" value="1"/>
</dbReference>
<dbReference type="PROSITE" id="PS51218">
    <property type="entry name" value="SF3_HELICASE_2"/>
    <property type="match status" value="1"/>
</dbReference>